<protein>
    <recommendedName>
        <fullName>Rhodopsin</fullName>
    </recommendedName>
</protein>
<comment type="function">
    <text evidence="1 3">Photoreceptor required for image-forming vision at low light intensity. Required for photoreceptor cell viability after birth (By similarity). Light-induced isomerization of 11-cis to all-trans retinal triggers a conformational change that activates signaling via G-proteins. Subsequent receptor phosphorylation mediates displacement of the bound G-protein alpha subunit by the arrestin SAG and terminates signaling (By similarity).</text>
</comment>
<comment type="subunit">
    <text evidence="1 3 4">Homodimer. May form a complex composed of RHO, GRK1 and RCVRN in a Ca(2+)-dependent manner; RCVRN prevents the interaction between GRK1 and RHO (By similarity). Interacts with GRK1 (By similarity). Interacts (phosphorylated form) with SAG (By similarity). Interacts with GNAT1 (By similarity). Interacts with GNAT3. SAG and G-proteins compete for a common binding site (By similarity). Interacts with PRCD; the interaction promotes PRCD stability (By similarity). Forms a complex with ASAP1 and ARF4. Forms a complex with ASAP1, RAB11A, Rabin8/RAB3IP, ARF4 and RAB11FIP3; the complex regulates Golgi-to-cilia rhodopsin/RHO transport in photoreceptors (By similarity).</text>
</comment>
<comment type="subcellular location">
    <subcellularLocation>
        <location evidence="1">Membrane</location>
        <topology evidence="1">Multi-pass membrane protein</topology>
    </subcellularLocation>
    <subcellularLocation>
        <location evidence="1">Cell projection</location>
        <location evidence="1">Cilium</location>
        <location evidence="1">Photoreceptor outer segment</location>
    </subcellularLocation>
    <text evidence="3">Synthesized in the inner segment (IS) of rod photoreceptor cells before vectorial transport to disk membranes in the rod outer segment (OS) photosensory cilia.</text>
</comment>
<comment type="PTM">
    <text evidence="1">Phosphorylated on some or all of the serine and threonine residues present in the C-terminal region.</text>
</comment>
<comment type="PTM">
    <text evidence="1">Contains one covalently linked retinal chromophore. Upon light absorption, the covalently bound 11-cis-retinal is converted to all-trans-retinal. After hydrolysis of the Schiff base and release of the covalently bound all-trans-retinal, active rhodopsin is regenerated by binding of a fresh molecule of 11-cis-retinal.</text>
</comment>
<comment type="similarity">
    <text evidence="6">Belongs to the G-protein coupled receptor 1 family. Opsin subfamily.</text>
</comment>
<evidence type="ECO:0000250" key="1">
    <source>
        <dbReference type="UniProtKB" id="P02699"/>
    </source>
</evidence>
<evidence type="ECO:0000250" key="2">
    <source>
        <dbReference type="UniProtKB" id="P02700"/>
    </source>
</evidence>
<evidence type="ECO:0000250" key="3">
    <source>
        <dbReference type="UniProtKB" id="P08100"/>
    </source>
</evidence>
<evidence type="ECO:0000250" key="4">
    <source>
        <dbReference type="UniProtKB" id="P15409"/>
    </source>
</evidence>
<evidence type="ECO:0000255" key="5"/>
<evidence type="ECO:0000255" key="6">
    <source>
        <dbReference type="PROSITE-ProRule" id="PRU00521"/>
    </source>
</evidence>
<evidence type="ECO:0000305" key="7"/>
<dbReference type="EMBL" id="AF055315">
    <property type="protein sequence ID" value="AAC12762.1"/>
    <property type="molecule type" value="mRNA"/>
</dbReference>
<dbReference type="BMRB" id="O62792"/>
<dbReference type="SMR" id="O62792"/>
<dbReference type="GlyCosmos" id="O62792">
    <property type="glycosylation" value="2 sites, No reported glycans"/>
</dbReference>
<dbReference type="GO" id="GO:0016020">
    <property type="term" value="C:membrane"/>
    <property type="evidence" value="ECO:0000250"/>
    <property type="project" value="UniProtKB"/>
</dbReference>
<dbReference type="GO" id="GO:0097381">
    <property type="term" value="C:photoreceptor disc membrane"/>
    <property type="evidence" value="ECO:0000250"/>
    <property type="project" value="UniProtKB"/>
</dbReference>
<dbReference type="GO" id="GO:0060342">
    <property type="term" value="C:photoreceptor inner segment membrane"/>
    <property type="evidence" value="ECO:0000250"/>
    <property type="project" value="UniProtKB"/>
</dbReference>
<dbReference type="GO" id="GO:0042622">
    <property type="term" value="C:photoreceptor outer segment membrane"/>
    <property type="evidence" value="ECO:0000250"/>
    <property type="project" value="UniProtKB"/>
</dbReference>
<dbReference type="GO" id="GO:0005886">
    <property type="term" value="C:plasma membrane"/>
    <property type="evidence" value="ECO:0000250"/>
    <property type="project" value="UniProtKB"/>
</dbReference>
<dbReference type="GO" id="GO:0005502">
    <property type="term" value="F:11-cis retinal binding"/>
    <property type="evidence" value="ECO:0000250"/>
    <property type="project" value="UniProtKB"/>
</dbReference>
<dbReference type="GO" id="GO:0008020">
    <property type="term" value="F:G protein-coupled photoreceptor activity"/>
    <property type="evidence" value="ECO:0000250"/>
    <property type="project" value="UniProtKB"/>
</dbReference>
<dbReference type="GO" id="GO:0046872">
    <property type="term" value="F:metal ion binding"/>
    <property type="evidence" value="ECO:0007669"/>
    <property type="project" value="UniProtKB-KW"/>
</dbReference>
<dbReference type="GO" id="GO:0016038">
    <property type="term" value="P:absorption of visible light"/>
    <property type="evidence" value="ECO:0000250"/>
    <property type="project" value="AgBase"/>
</dbReference>
<dbReference type="GO" id="GO:0016056">
    <property type="term" value="P:G protein-coupled opsin signaling pathway"/>
    <property type="evidence" value="ECO:0000250"/>
    <property type="project" value="UniProtKB"/>
</dbReference>
<dbReference type="GO" id="GO:0007601">
    <property type="term" value="P:visual perception"/>
    <property type="evidence" value="ECO:0007669"/>
    <property type="project" value="UniProtKB-KW"/>
</dbReference>
<dbReference type="CDD" id="cd15080">
    <property type="entry name" value="7tmA_MWS_opsin"/>
    <property type="match status" value="1"/>
</dbReference>
<dbReference type="FunFam" id="1.20.1070.10:FF:000018">
    <property type="entry name" value="Rhodopsin"/>
    <property type="match status" value="1"/>
</dbReference>
<dbReference type="Gene3D" id="1.20.1070.10">
    <property type="entry name" value="Rhodopsin 7-helix transmembrane proteins"/>
    <property type="match status" value="1"/>
</dbReference>
<dbReference type="InterPro" id="IPR050125">
    <property type="entry name" value="GPCR_opsins"/>
</dbReference>
<dbReference type="InterPro" id="IPR000276">
    <property type="entry name" value="GPCR_Rhodpsn"/>
</dbReference>
<dbReference type="InterPro" id="IPR017452">
    <property type="entry name" value="GPCR_Rhodpsn_7TM"/>
</dbReference>
<dbReference type="InterPro" id="IPR001760">
    <property type="entry name" value="Opsin"/>
</dbReference>
<dbReference type="InterPro" id="IPR027430">
    <property type="entry name" value="Retinal_BS"/>
</dbReference>
<dbReference type="InterPro" id="IPR000732">
    <property type="entry name" value="Rhodopsin"/>
</dbReference>
<dbReference type="InterPro" id="IPR019477">
    <property type="entry name" value="Rhodopsin_N"/>
</dbReference>
<dbReference type="PANTHER" id="PTHR24240">
    <property type="entry name" value="OPSIN"/>
    <property type="match status" value="1"/>
</dbReference>
<dbReference type="Pfam" id="PF00001">
    <property type="entry name" value="7tm_1"/>
    <property type="match status" value="1"/>
</dbReference>
<dbReference type="Pfam" id="PF10413">
    <property type="entry name" value="Rhodopsin_N"/>
    <property type="match status" value="1"/>
</dbReference>
<dbReference type="PRINTS" id="PR00237">
    <property type="entry name" value="GPCRRHODOPSN"/>
</dbReference>
<dbReference type="PRINTS" id="PR00238">
    <property type="entry name" value="OPSIN"/>
</dbReference>
<dbReference type="PRINTS" id="PR00579">
    <property type="entry name" value="RHODOPSIN"/>
</dbReference>
<dbReference type="SUPFAM" id="SSF81321">
    <property type="entry name" value="Family A G protein-coupled receptor-like"/>
    <property type="match status" value="1"/>
</dbReference>
<dbReference type="PROSITE" id="PS00237">
    <property type="entry name" value="G_PROTEIN_RECEP_F1_1"/>
    <property type="match status" value="1"/>
</dbReference>
<dbReference type="PROSITE" id="PS50262">
    <property type="entry name" value="G_PROTEIN_RECEP_F1_2"/>
    <property type="match status" value="1"/>
</dbReference>
<dbReference type="PROSITE" id="PS00238">
    <property type="entry name" value="OPSIN"/>
    <property type="match status" value="1"/>
</dbReference>
<proteinExistence type="evidence at transcript level"/>
<organism>
    <name type="scientific">Globicephala melas</name>
    <name type="common">Long-finned pilot whale</name>
    <name type="synonym">Globicephala melaena</name>
    <dbReference type="NCBI Taxonomy" id="9731"/>
    <lineage>
        <taxon>Eukaryota</taxon>
        <taxon>Metazoa</taxon>
        <taxon>Chordata</taxon>
        <taxon>Craniata</taxon>
        <taxon>Vertebrata</taxon>
        <taxon>Euteleostomi</taxon>
        <taxon>Mammalia</taxon>
        <taxon>Eutheria</taxon>
        <taxon>Laurasiatheria</taxon>
        <taxon>Artiodactyla</taxon>
        <taxon>Whippomorpha</taxon>
        <taxon>Cetacea</taxon>
        <taxon>Odontoceti</taxon>
        <taxon>Delphinidae</taxon>
        <taxon>Globicephala</taxon>
    </lineage>
</organism>
<feature type="chain" id="PRO_0000197675" description="Rhodopsin">
    <location>
        <begin position="1"/>
        <end position="348"/>
    </location>
</feature>
<feature type="topological domain" description="Extracellular" evidence="7">
    <location>
        <begin position="1"/>
        <end position="36"/>
    </location>
</feature>
<feature type="transmembrane region" description="Helical; Name=1" evidence="1">
    <location>
        <begin position="37"/>
        <end position="61"/>
    </location>
</feature>
<feature type="topological domain" description="Cytoplasmic" evidence="7">
    <location>
        <begin position="62"/>
        <end position="73"/>
    </location>
</feature>
<feature type="transmembrane region" description="Helical; Name=2" evidence="1">
    <location>
        <begin position="74"/>
        <end position="96"/>
    </location>
</feature>
<feature type="topological domain" description="Extracellular" evidence="7">
    <location>
        <begin position="97"/>
        <end position="110"/>
    </location>
</feature>
<feature type="transmembrane region" description="Helical; Name=3" evidence="1">
    <location>
        <begin position="111"/>
        <end position="133"/>
    </location>
</feature>
<feature type="topological domain" description="Cytoplasmic" evidence="7">
    <location>
        <begin position="134"/>
        <end position="152"/>
    </location>
</feature>
<feature type="transmembrane region" description="Helical; Name=4" evidence="1">
    <location>
        <begin position="153"/>
        <end position="173"/>
    </location>
</feature>
<feature type="topological domain" description="Extracellular" evidence="7">
    <location>
        <begin position="174"/>
        <end position="202"/>
    </location>
</feature>
<feature type="transmembrane region" description="Helical; Name=5" evidence="1">
    <location>
        <begin position="203"/>
        <end position="224"/>
    </location>
</feature>
<feature type="topological domain" description="Cytoplasmic" evidence="7">
    <location>
        <begin position="225"/>
        <end position="252"/>
    </location>
</feature>
<feature type="transmembrane region" description="Helical; Name=6" evidence="1">
    <location>
        <begin position="253"/>
        <end position="274"/>
    </location>
</feature>
<feature type="topological domain" description="Extracellular" evidence="7">
    <location>
        <begin position="275"/>
        <end position="286"/>
    </location>
</feature>
<feature type="transmembrane region" description="Helical; Name=7" evidence="1">
    <location>
        <begin position="287"/>
        <end position="308"/>
    </location>
</feature>
<feature type="topological domain" description="Cytoplasmic" evidence="7">
    <location>
        <begin position="309"/>
        <end position="348"/>
    </location>
</feature>
<feature type="region of interest" description="Interaction with SAG" evidence="1">
    <location>
        <begin position="330"/>
        <end position="348"/>
    </location>
</feature>
<feature type="short sequence motif" description="'Ionic lock' involved in activated form stabilization" evidence="1">
    <location>
        <begin position="134"/>
        <end position="136"/>
    </location>
</feature>
<feature type="binding site" evidence="1">
    <location>
        <position position="201"/>
    </location>
    <ligand>
        <name>Zn(2+)</name>
        <dbReference type="ChEBI" id="CHEBI:29105"/>
    </ligand>
</feature>
<feature type="binding site" evidence="1">
    <location>
        <position position="279"/>
    </location>
    <ligand>
        <name>Zn(2+)</name>
        <dbReference type="ChEBI" id="CHEBI:29105"/>
    </ligand>
</feature>
<feature type="site" description="Plays an important role in the conformation switch to the active conformation" evidence="1">
    <location>
        <position position="113"/>
    </location>
</feature>
<feature type="modified residue" description="N-acetylmethionine" evidence="1">
    <location>
        <position position="1"/>
    </location>
</feature>
<feature type="modified residue" description="N6-(retinylidene)lysine" evidence="1">
    <location>
        <position position="296"/>
    </location>
</feature>
<feature type="modified residue" description="Phosphoserine" evidence="2">
    <location>
        <position position="334"/>
    </location>
</feature>
<feature type="modified residue" description="Phosphothreonine" evidence="2">
    <location>
        <position position="335"/>
    </location>
</feature>
<feature type="modified residue" description="Phosphothreonine" evidence="2">
    <location>
        <position position="336"/>
    </location>
</feature>
<feature type="modified residue" description="Phosphoserine" evidence="2">
    <location>
        <position position="338"/>
    </location>
</feature>
<feature type="modified residue" description="Phosphothreonine" evidence="1">
    <location>
        <position position="340"/>
    </location>
</feature>
<feature type="modified residue" description="Phosphothreonine" evidence="1">
    <location>
        <position position="342"/>
    </location>
</feature>
<feature type="modified residue" description="Phosphoserine" evidence="1">
    <location>
        <position position="343"/>
    </location>
</feature>
<feature type="lipid moiety-binding region" description="S-palmitoyl cysteine" evidence="1">
    <location>
        <position position="322"/>
    </location>
</feature>
<feature type="lipid moiety-binding region" description="S-palmitoyl cysteine" evidence="1">
    <location>
        <position position="323"/>
    </location>
</feature>
<feature type="glycosylation site" description="N-linked (GlcNAc...) asparagine" evidence="5">
    <location>
        <position position="2"/>
    </location>
</feature>
<feature type="glycosylation site" description="N-linked (GlcNAc...) asparagine" evidence="5">
    <location>
        <position position="15"/>
    </location>
</feature>
<feature type="disulfide bond" evidence="6">
    <location>
        <begin position="110"/>
        <end position="187"/>
    </location>
</feature>
<keyword id="KW-0007">Acetylation</keyword>
<keyword id="KW-0966">Cell projection</keyword>
<keyword id="KW-0157">Chromophore</keyword>
<keyword id="KW-1015">Disulfide bond</keyword>
<keyword id="KW-0297">G-protein coupled receptor</keyword>
<keyword id="KW-0325">Glycoprotein</keyword>
<keyword id="KW-0449">Lipoprotein</keyword>
<keyword id="KW-0472">Membrane</keyword>
<keyword id="KW-0479">Metal-binding</keyword>
<keyword id="KW-0564">Palmitate</keyword>
<keyword id="KW-0597">Phosphoprotein</keyword>
<keyword id="KW-0600">Photoreceptor protein</keyword>
<keyword id="KW-0675">Receptor</keyword>
<keyword id="KW-0681">Retinal protein</keyword>
<keyword id="KW-0716">Sensory transduction</keyword>
<keyword id="KW-0807">Transducer</keyword>
<keyword id="KW-0812">Transmembrane</keyword>
<keyword id="KW-1133">Transmembrane helix</keyword>
<keyword id="KW-0844">Vision</keyword>
<keyword id="KW-0862">Zinc</keyword>
<name>OPSD_GLOME</name>
<accession>O62792</accession>
<reference key="1">
    <citation type="submission" date="1998-03" db="EMBL/GenBank/DDBJ databases">
        <authorList>
            <person name="Fasick J.I."/>
            <person name="Robinson P.R."/>
        </authorList>
    </citation>
    <scope>NUCLEOTIDE SEQUENCE [MRNA]</scope>
</reference>
<sequence length="348" mass="39055">MNGTEGLNFYVPFSNKTGVVRSPFEYPQYYLAEPWQFSVLAAYMFLLIVLGFPINFLTLYVTVQHKKLRTPLNYIPLNLAVANLFMVFGGFTTTLYTSLHAYFVFGPTGCNLEGFFATLGGEIALWSLVVLAIERYVVVCKPMSNFRFGENHAIMGLALTWVMAMACAAPPLVGWSRYIPEGMQCSCGIDYYTSRQEVNNESFVIYMFVVHFTIPLVIIFFCYGQLVFTVKEAAAQQQESATTQKAEKEVTRMVIIMVVAFLICWVPYASVAFYIFTHQGSDFGPIFMTIPSFFAKSSSIYNPVIYIMMNKQLRNCMLTTLCCGRNPLGDDEASTTASKTETSQVAPA</sequence>
<gene>
    <name type="primary">RHO</name>
</gene>